<evidence type="ECO:0000255" key="1">
    <source>
        <dbReference type="HAMAP-Rule" id="MF_00364"/>
    </source>
</evidence>
<name>NAGZ_ESCF3</name>
<sequence length="341" mass="37530">MGPVMLDVEGYELDAEEREILAHPLVGGLILFTRNYHDPQQLRELVRQIRAASRNHLVIAVDQEGGRVQRFRDGFTRLPAAQSFAALLGMDEGGKLAQEAGWLMASEMIAMDIDISFAPVLDVGHISAAIGERSYHADPQKALAIASKFIDGMHEAGMKTTGKHFPGHGAVTADSHKETPCDPRPEADIRNKDMSVFSQLIRENKLDAIMPAHVIYSSVDPRPASGSPHWLKTVLRGELGFDGVIFSDDLSMEGAAIMGSYAERGQASLDAGCDMILVCNNRKGATSVLDNLSPINAPRVTRLYHKGSFSRQELMDSPRWKNISAQLNQLHERWQEEKAGH</sequence>
<comment type="function">
    <text evidence="1">Plays a role in peptidoglycan recycling by cleaving the terminal beta-1,4-linked N-acetylglucosamine (GlcNAc) from peptide-linked peptidoglycan fragments, giving rise to free GlcNAc, anhydro-N-acetylmuramic acid and anhydro-N-acetylmuramic acid-linked peptides.</text>
</comment>
<comment type="catalytic activity">
    <reaction evidence="1">
        <text>Hydrolysis of terminal non-reducing N-acetyl-D-hexosamine residues in N-acetyl-beta-D-hexosaminides.</text>
        <dbReference type="EC" id="3.2.1.52"/>
    </reaction>
</comment>
<comment type="pathway">
    <text evidence="1">Cell wall biogenesis; peptidoglycan recycling.</text>
</comment>
<comment type="subcellular location">
    <subcellularLocation>
        <location evidence="1">Cytoplasm</location>
    </subcellularLocation>
</comment>
<comment type="similarity">
    <text evidence="1">Belongs to the glycosyl hydrolase 3 family. NagZ subfamily.</text>
</comment>
<feature type="chain" id="PRO_1000121062" description="Beta-hexosaminidase">
    <location>
        <begin position="1"/>
        <end position="341"/>
    </location>
</feature>
<feature type="active site" description="Proton donor/acceptor" evidence="1">
    <location>
        <position position="176"/>
    </location>
</feature>
<feature type="active site" description="Nucleophile" evidence="1">
    <location>
        <position position="248"/>
    </location>
</feature>
<feature type="binding site" evidence="1">
    <location>
        <position position="62"/>
    </location>
    <ligand>
        <name>substrate</name>
    </ligand>
</feature>
<feature type="binding site" evidence="1">
    <location>
        <position position="70"/>
    </location>
    <ligand>
        <name>substrate</name>
    </ligand>
</feature>
<feature type="binding site" evidence="1">
    <location>
        <position position="133"/>
    </location>
    <ligand>
        <name>substrate</name>
    </ligand>
</feature>
<feature type="binding site" evidence="1">
    <location>
        <begin position="163"/>
        <end position="164"/>
    </location>
    <ligand>
        <name>substrate</name>
    </ligand>
</feature>
<feature type="site" description="Important for catalytic activity" evidence="1">
    <location>
        <position position="174"/>
    </location>
</feature>
<dbReference type="EC" id="3.2.1.52" evidence="1"/>
<dbReference type="EMBL" id="CU928158">
    <property type="protein sequence ID" value="CAQ89336.1"/>
    <property type="molecule type" value="Genomic_DNA"/>
</dbReference>
<dbReference type="RefSeq" id="WP_000529328.1">
    <property type="nucleotide sequence ID" value="NC_011740.1"/>
</dbReference>
<dbReference type="SMR" id="B7LT32"/>
<dbReference type="CAZy" id="GH3">
    <property type="family name" value="Glycoside Hydrolase Family 3"/>
</dbReference>
<dbReference type="GeneID" id="75057141"/>
<dbReference type="KEGG" id="efe:EFER_1821"/>
<dbReference type="HOGENOM" id="CLU_008392_0_0_6"/>
<dbReference type="OrthoDB" id="9786661at2"/>
<dbReference type="UniPathway" id="UPA00544"/>
<dbReference type="Proteomes" id="UP000000745">
    <property type="component" value="Chromosome"/>
</dbReference>
<dbReference type="GO" id="GO:0005737">
    <property type="term" value="C:cytoplasm"/>
    <property type="evidence" value="ECO:0007669"/>
    <property type="project" value="UniProtKB-SubCell"/>
</dbReference>
<dbReference type="GO" id="GO:0004563">
    <property type="term" value="F:beta-N-acetylhexosaminidase activity"/>
    <property type="evidence" value="ECO:0007669"/>
    <property type="project" value="UniProtKB-UniRule"/>
</dbReference>
<dbReference type="GO" id="GO:0005975">
    <property type="term" value="P:carbohydrate metabolic process"/>
    <property type="evidence" value="ECO:0007669"/>
    <property type="project" value="InterPro"/>
</dbReference>
<dbReference type="GO" id="GO:0051301">
    <property type="term" value="P:cell division"/>
    <property type="evidence" value="ECO:0007669"/>
    <property type="project" value="UniProtKB-KW"/>
</dbReference>
<dbReference type="GO" id="GO:0071555">
    <property type="term" value="P:cell wall organization"/>
    <property type="evidence" value="ECO:0007669"/>
    <property type="project" value="UniProtKB-KW"/>
</dbReference>
<dbReference type="GO" id="GO:0009252">
    <property type="term" value="P:peptidoglycan biosynthetic process"/>
    <property type="evidence" value="ECO:0007669"/>
    <property type="project" value="UniProtKB-KW"/>
</dbReference>
<dbReference type="GO" id="GO:0009254">
    <property type="term" value="P:peptidoglycan turnover"/>
    <property type="evidence" value="ECO:0007669"/>
    <property type="project" value="UniProtKB-UniRule"/>
</dbReference>
<dbReference type="GO" id="GO:0008360">
    <property type="term" value="P:regulation of cell shape"/>
    <property type="evidence" value="ECO:0007669"/>
    <property type="project" value="UniProtKB-KW"/>
</dbReference>
<dbReference type="FunFam" id="3.20.20.300:FF:000001">
    <property type="entry name" value="Beta-hexosaminidase"/>
    <property type="match status" value="1"/>
</dbReference>
<dbReference type="Gene3D" id="3.20.20.300">
    <property type="entry name" value="Glycoside hydrolase, family 3, N-terminal domain"/>
    <property type="match status" value="1"/>
</dbReference>
<dbReference type="HAMAP" id="MF_00364">
    <property type="entry name" value="NagZ"/>
    <property type="match status" value="1"/>
</dbReference>
<dbReference type="InterPro" id="IPR022956">
    <property type="entry name" value="Beta_hexosaminidase_bac"/>
</dbReference>
<dbReference type="InterPro" id="IPR019800">
    <property type="entry name" value="Glyco_hydro_3_AS"/>
</dbReference>
<dbReference type="InterPro" id="IPR001764">
    <property type="entry name" value="Glyco_hydro_3_N"/>
</dbReference>
<dbReference type="InterPro" id="IPR036962">
    <property type="entry name" value="Glyco_hydro_3_N_sf"/>
</dbReference>
<dbReference type="InterPro" id="IPR017853">
    <property type="entry name" value="Glycoside_hydrolase_SF"/>
</dbReference>
<dbReference type="InterPro" id="IPR050226">
    <property type="entry name" value="NagZ_Beta-hexosaminidase"/>
</dbReference>
<dbReference type="NCBIfam" id="NF003740">
    <property type="entry name" value="PRK05337.1"/>
    <property type="match status" value="1"/>
</dbReference>
<dbReference type="PANTHER" id="PTHR30480:SF13">
    <property type="entry name" value="BETA-HEXOSAMINIDASE"/>
    <property type="match status" value="1"/>
</dbReference>
<dbReference type="PANTHER" id="PTHR30480">
    <property type="entry name" value="BETA-HEXOSAMINIDASE-RELATED"/>
    <property type="match status" value="1"/>
</dbReference>
<dbReference type="Pfam" id="PF00933">
    <property type="entry name" value="Glyco_hydro_3"/>
    <property type="match status" value="1"/>
</dbReference>
<dbReference type="SUPFAM" id="SSF51445">
    <property type="entry name" value="(Trans)glycosidases"/>
    <property type="match status" value="1"/>
</dbReference>
<dbReference type="PROSITE" id="PS00775">
    <property type="entry name" value="GLYCOSYL_HYDROL_F3"/>
    <property type="match status" value="1"/>
</dbReference>
<reference key="1">
    <citation type="journal article" date="2009" name="PLoS Genet.">
        <title>Organised genome dynamics in the Escherichia coli species results in highly diverse adaptive paths.</title>
        <authorList>
            <person name="Touchon M."/>
            <person name="Hoede C."/>
            <person name="Tenaillon O."/>
            <person name="Barbe V."/>
            <person name="Baeriswyl S."/>
            <person name="Bidet P."/>
            <person name="Bingen E."/>
            <person name="Bonacorsi S."/>
            <person name="Bouchier C."/>
            <person name="Bouvet O."/>
            <person name="Calteau A."/>
            <person name="Chiapello H."/>
            <person name="Clermont O."/>
            <person name="Cruveiller S."/>
            <person name="Danchin A."/>
            <person name="Diard M."/>
            <person name="Dossat C."/>
            <person name="Karoui M.E."/>
            <person name="Frapy E."/>
            <person name="Garry L."/>
            <person name="Ghigo J.M."/>
            <person name="Gilles A.M."/>
            <person name="Johnson J."/>
            <person name="Le Bouguenec C."/>
            <person name="Lescat M."/>
            <person name="Mangenot S."/>
            <person name="Martinez-Jehanne V."/>
            <person name="Matic I."/>
            <person name="Nassif X."/>
            <person name="Oztas S."/>
            <person name="Petit M.A."/>
            <person name="Pichon C."/>
            <person name="Rouy Z."/>
            <person name="Ruf C.S."/>
            <person name="Schneider D."/>
            <person name="Tourret J."/>
            <person name="Vacherie B."/>
            <person name="Vallenet D."/>
            <person name="Medigue C."/>
            <person name="Rocha E.P.C."/>
            <person name="Denamur E."/>
        </authorList>
    </citation>
    <scope>NUCLEOTIDE SEQUENCE [LARGE SCALE GENOMIC DNA]</scope>
    <source>
        <strain>ATCC 35469 / DSM 13698 / BCRC 15582 / CCUG 18766 / IAM 14443 / JCM 21226 / LMG 7866 / NBRC 102419 / NCTC 12128 / CDC 0568-73</strain>
    </source>
</reference>
<accession>B7LT32</accession>
<proteinExistence type="inferred from homology"/>
<gene>
    <name evidence="1" type="primary">nagZ</name>
    <name type="ordered locus">EFER_1821</name>
</gene>
<protein>
    <recommendedName>
        <fullName evidence="1">Beta-hexosaminidase</fullName>
        <ecNumber evidence="1">3.2.1.52</ecNumber>
    </recommendedName>
    <alternativeName>
        <fullName evidence="1">Beta-N-acetylhexosaminidase</fullName>
    </alternativeName>
    <alternativeName>
        <fullName evidence="1">N-acetyl-beta-glucosaminidase</fullName>
    </alternativeName>
</protein>
<organism>
    <name type="scientific">Escherichia fergusonii (strain ATCC 35469 / DSM 13698 / CCUG 18766 / IAM 14443 / JCM 21226 / LMG 7866 / NBRC 102419 / NCTC 12128 / CDC 0568-73)</name>
    <dbReference type="NCBI Taxonomy" id="585054"/>
    <lineage>
        <taxon>Bacteria</taxon>
        <taxon>Pseudomonadati</taxon>
        <taxon>Pseudomonadota</taxon>
        <taxon>Gammaproteobacteria</taxon>
        <taxon>Enterobacterales</taxon>
        <taxon>Enterobacteriaceae</taxon>
        <taxon>Escherichia</taxon>
    </lineage>
</organism>
<keyword id="KW-0131">Cell cycle</keyword>
<keyword id="KW-0132">Cell division</keyword>
<keyword id="KW-0133">Cell shape</keyword>
<keyword id="KW-0961">Cell wall biogenesis/degradation</keyword>
<keyword id="KW-0963">Cytoplasm</keyword>
<keyword id="KW-0326">Glycosidase</keyword>
<keyword id="KW-0378">Hydrolase</keyword>
<keyword id="KW-0573">Peptidoglycan synthesis</keyword>